<comment type="function">
    <text evidence="1">Catalyzes the phosphorolysis of diverse nucleosides, yielding D-ribose 1-phosphate and the respective free bases. Can use uridine, adenosine, guanosine, cytidine, thymidine, inosine and xanthosine as substrates. Also catalyzes the reverse reactions.</text>
</comment>
<comment type="catalytic activity">
    <reaction evidence="1">
        <text>a purine D-ribonucleoside + phosphate = a purine nucleobase + alpha-D-ribose 1-phosphate</text>
        <dbReference type="Rhea" id="RHEA:19805"/>
        <dbReference type="ChEBI" id="CHEBI:26386"/>
        <dbReference type="ChEBI" id="CHEBI:43474"/>
        <dbReference type="ChEBI" id="CHEBI:57720"/>
        <dbReference type="ChEBI" id="CHEBI:142355"/>
        <dbReference type="EC" id="2.4.2.1"/>
    </reaction>
</comment>
<comment type="catalytic activity">
    <reaction evidence="1">
        <text>adenosine + phosphate = alpha-D-ribose 1-phosphate + adenine</text>
        <dbReference type="Rhea" id="RHEA:27642"/>
        <dbReference type="ChEBI" id="CHEBI:16335"/>
        <dbReference type="ChEBI" id="CHEBI:16708"/>
        <dbReference type="ChEBI" id="CHEBI:43474"/>
        <dbReference type="ChEBI" id="CHEBI:57720"/>
        <dbReference type="EC" id="2.4.2.1"/>
    </reaction>
</comment>
<comment type="catalytic activity">
    <reaction evidence="1">
        <text>cytidine + phosphate = cytosine + alpha-D-ribose 1-phosphate</text>
        <dbReference type="Rhea" id="RHEA:52540"/>
        <dbReference type="ChEBI" id="CHEBI:16040"/>
        <dbReference type="ChEBI" id="CHEBI:17562"/>
        <dbReference type="ChEBI" id="CHEBI:43474"/>
        <dbReference type="ChEBI" id="CHEBI:57720"/>
        <dbReference type="EC" id="2.4.2.2"/>
    </reaction>
</comment>
<comment type="catalytic activity">
    <reaction evidence="1">
        <text>guanosine + phosphate = alpha-D-ribose 1-phosphate + guanine</text>
        <dbReference type="Rhea" id="RHEA:13233"/>
        <dbReference type="ChEBI" id="CHEBI:16235"/>
        <dbReference type="ChEBI" id="CHEBI:16750"/>
        <dbReference type="ChEBI" id="CHEBI:43474"/>
        <dbReference type="ChEBI" id="CHEBI:57720"/>
        <dbReference type="EC" id="2.4.2.1"/>
    </reaction>
</comment>
<comment type="catalytic activity">
    <reaction evidence="1">
        <text>inosine + phosphate = alpha-D-ribose 1-phosphate + hypoxanthine</text>
        <dbReference type="Rhea" id="RHEA:27646"/>
        <dbReference type="ChEBI" id="CHEBI:17368"/>
        <dbReference type="ChEBI" id="CHEBI:17596"/>
        <dbReference type="ChEBI" id="CHEBI:43474"/>
        <dbReference type="ChEBI" id="CHEBI:57720"/>
        <dbReference type="EC" id="2.4.2.1"/>
    </reaction>
</comment>
<comment type="catalytic activity">
    <reaction evidence="1">
        <text>thymidine + phosphate = 2-deoxy-alpha-D-ribose 1-phosphate + thymine</text>
        <dbReference type="Rhea" id="RHEA:16037"/>
        <dbReference type="ChEBI" id="CHEBI:17748"/>
        <dbReference type="ChEBI" id="CHEBI:17821"/>
        <dbReference type="ChEBI" id="CHEBI:43474"/>
        <dbReference type="ChEBI" id="CHEBI:57259"/>
        <dbReference type="EC" id="2.4.2.2"/>
    </reaction>
</comment>
<comment type="catalytic activity">
    <reaction evidence="1">
        <text>uridine + phosphate = alpha-D-ribose 1-phosphate + uracil</text>
        <dbReference type="Rhea" id="RHEA:24388"/>
        <dbReference type="ChEBI" id="CHEBI:16704"/>
        <dbReference type="ChEBI" id="CHEBI:17568"/>
        <dbReference type="ChEBI" id="CHEBI:43474"/>
        <dbReference type="ChEBI" id="CHEBI:57720"/>
        <dbReference type="EC" id="2.4.2.2"/>
    </reaction>
</comment>
<comment type="catalytic activity">
    <reaction evidence="1">
        <text>xanthosine + phosphate = alpha-D-ribose 1-phosphate + xanthine</text>
        <dbReference type="Rhea" id="RHEA:27638"/>
        <dbReference type="ChEBI" id="CHEBI:17712"/>
        <dbReference type="ChEBI" id="CHEBI:18107"/>
        <dbReference type="ChEBI" id="CHEBI:43474"/>
        <dbReference type="ChEBI" id="CHEBI:57720"/>
        <dbReference type="EC" id="2.4.2.1"/>
    </reaction>
</comment>
<comment type="similarity">
    <text evidence="1">Belongs to the nucleoside phosphorylase PpnP family.</text>
</comment>
<feature type="chain" id="PRO_1000198643" description="Pyrimidine/purine nucleoside phosphorylase">
    <location>
        <begin position="1"/>
        <end position="108"/>
    </location>
</feature>
<dbReference type="EC" id="2.4.2.1" evidence="1"/>
<dbReference type="EC" id="2.4.2.2" evidence="1"/>
<dbReference type="EMBL" id="CP001172">
    <property type="protein sequence ID" value="ACJ59385.1"/>
    <property type="molecule type" value="Genomic_DNA"/>
</dbReference>
<dbReference type="RefSeq" id="WP_000099685.1">
    <property type="nucleotide sequence ID" value="NZ_CP001172.1"/>
</dbReference>
<dbReference type="SMR" id="B7H1G4"/>
<dbReference type="HOGENOM" id="CLU_157874_1_0_6"/>
<dbReference type="Proteomes" id="UP000006924">
    <property type="component" value="Chromosome"/>
</dbReference>
<dbReference type="GO" id="GO:0005829">
    <property type="term" value="C:cytosol"/>
    <property type="evidence" value="ECO:0007669"/>
    <property type="project" value="TreeGrafter"/>
</dbReference>
<dbReference type="GO" id="GO:0047975">
    <property type="term" value="F:guanosine phosphorylase activity"/>
    <property type="evidence" value="ECO:0007669"/>
    <property type="project" value="UniProtKB-EC"/>
</dbReference>
<dbReference type="GO" id="GO:0004731">
    <property type="term" value="F:purine-nucleoside phosphorylase activity"/>
    <property type="evidence" value="ECO:0007669"/>
    <property type="project" value="UniProtKB-UniRule"/>
</dbReference>
<dbReference type="GO" id="GO:0009032">
    <property type="term" value="F:thymidine phosphorylase activity"/>
    <property type="evidence" value="ECO:0007669"/>
    <property type="project" value="UniProtKB-EC"/>
</dbReference>
<dbReference type="GO" id="GO:0004850">
    <property type="term" value="F:uridine phosphorylase activity"/>
    <property type="evidence" value="ECO:0007669"/>
    <property type="project" value="UniProtKB-EC"/>
</dbReference>
<dbReference type="CDD" id="cd20296">
    <property type="entry name" value="cupin_PpnP-like"/>
    <property type="match status" value="1"/>
</dbReference>
<dbReference type="Gene3D" id="2.60.120.10">
    <property type="entry name" value="Jelly Rolls"/>
    <property type="match status" value="1"/>
</dbReference>
<dbReference type="HAMAP" id="MF_01537">
    <property type="entry name" value="Nucleos_phosphorylase_PpnP"/>
    <property type="match status" value="1"/>
</dbReference>
<dbReference type="InterPro" id="IPR009664">
    <property type="entry name" value="Ppnp"/>
</dbReference>
<dbReference type="InterPro" id="IPR014710">
    <property type="entry name" value="RmlC-like_jellyroll"/>
</dbReference>
<dbReference type="InterPro" id="IPR011051">
    <property type="entry name" value="RmlC_Cupin_sf"/>
</dbReference>
<dbReference type="PANTHER" id="PTHR36540">
    <property type="entry name" value="PYRIMIDINE/PURINE NUCLEOSIDE PHOSPHORYLASE"/>
    <property type="match status" value="1"/>
</dbReference>
<dbReference type="PANTHER" id="PTHR36540:SF1">
    <property type="entry name" value="PYRIMIDINE_PURINE NUCLEOSIDE PHOSPHORYLASE"/>
    <property type="match status" value="1"/>
</dbReference>
<dbReference type="Pfam" id="PF06865">
    <property type="entry name" value="Ppnp"/>
    <property type="match status" value="1"/>
</dbReference>
<dbReference type="SUPFAM" id="SSF51182">
    <property type="entry name" value="RmlC-like cupins"/>
    <property type="match status" value="1"/>
</dbReference>
<organism>
    <name type="scientific">Acinetobacter baumannii (strain AB307-0294)</name>
    <dbReference type="NCBI Taxonomy" id="557600"/>
    <lineage>
        <taxon>Bacteria</taxon>
        <taxon>Pseudomonadati</taxon>
        <taxon>Pseudomonadota</taxon>
        <taxon>Gammaproteobacteria</taxon>
        <taxon>Moraxellales</taxon>
        <taxon>Moraxellaceae</taxon>
        <taxon>Acinetobacter</taxon>
        <taxon>Acinetobacter calcoaceticus/baumannii complex</taxon>
    </lineage>
</organism>
<protein>
    <recommendedName>
        <fullName evidence="1">Pyrimidine/purine nucleoside phosphorylase</fullName>
        <ecNumber evidence="1">2.4.2.1</ecNumber>
        <ecNumber evidence="1">2.4.2.2</ecNumber>
    </recommendedName>
    <alternativeName>
        <fullName evidence="1">Adenosine phosphorylase</fullName>
    </alternativeName>
    <alternativeName>
        <fullName evidence="1">Cytidine phosphorylase</fullName>
    </alternativeName>
    <alternativeName>
        <fullName evidence="1">Guanosine phosphorylase</fullName>
    </alternativeName>
    <alternativeName>
        <fullName evidence="1">Inosine phosphorylase</fullName>
    </alternativeName>
    <alternativeName>
        <fullName evidence="1">Thymidine phosphorylase</fullName>
    </alternativeName>
    <alternativeName>
        <fullName evidence="1">Uridine phosphorylase</fullName>
    </alternativeName>
    <alternativeName>
        <fullName evidence="1">Xanthosine phosphorylase</fullName>
    </alternativeName>
</protein>
<evidence type="ECO:0000255" key="1">
    <source>
        <dbReference type="HAMAP-Rule" id="MF_01537"/>
    </source>
</evidence>
<accession>B7H1G4</accession>
<proteinExistence type="inferred from homology"/>
<keyword id="KW-0328">Glycosyltransferase</keyword>
<keyword id="KW-0808">Transferase</keyword>
<sequence length="108" mass="12060">MSSTQFDHVTVIKKSNVYFGGACISHTVQFEDGTKKTLGVILPTEQPLTFETHVPERMEIISGECRVKIADSNESELFRAGQSFYVPGNSVFKIETDEVLDYVCHLEG</sequence>
<reference key="1">
    <citation type="journal article" date="2008" name="J. Bacteriol.">
        <title>Comparative genome sequence analysis of multidrug-resistant Acinetobacter baumannii.</title>
        <authorList>
            <person name="Adams M.D."/>
            <person name="Goglin K."/>
            <person name="Molyneaux N."/>
            <person name="Hujer K.M."/>
            <person name="Lavender H."/>
            <person name="Jamison J.J."/>
            <person name="MacDonald I.J."/>
            <person name="Martin K.M."/>
            <person name="Russo T."/>
            <person name="Campagnari A.A."/>
            <person name="Hujer A.M."/>
            <person name="Bonomo R.A."/>
            <person name="Gill S.R."/>
        </authorList>
    </citation>
    <scope>NUCLEOTIDE SEQUENCE [LARGE SCALE GENOMIC DNA]</scope>
    <source>
        <strain>AB307-0294</strain>
    </source>
</reference>
<name>PPNP_ACIB3</name>
<gene>
    <name evidence="1" type="primary">ppnP</name>
    <name type="ordered locus">ABBFA_003214</name>
</gene>